<comment type="function">
    <text evidence="1">Required for nuclear protein import and mediates docking of import substrate to distinct nucleoporins. Serves a receptor for nuclear localization signals. Mediates the nuclear import of TATA-binding protein (TBP) and of histones H2A and H2B (By similarity).</text>
</comment>
<comment type="subcellular location">
    <subcellularLocation>
        <location evidence="3">Nucleus</location>
    </subcellularLocation>
</comment>
<protein>
    <recommendedName>
        <fullName>Importin subunit beta-5</fullName>
    </recommendedName>
    <alternativeName>
        <fullName>114 kDa karyopherin</fullName>
    </alternativeName>
    <alternativeName>
        <fullName>Karyopherin subunit beta-5</fullName>
    </alternativeName>
    <alternativeName>
        <fullName>Karyopherin-114</fullName>
    </alternativeName>
</protein>
<evidence type="ECO:0000250" key="1"/>
<evidence type="ECO:0000255" key="2">
    <source>
        <dbReference type="PROSITE-ProRule" id="PRU00115"/>
    </source>
</evidence>
<evidence type="ECO:0000269" key="3">
    <source>
    </source>
</evidence>
<keyword id="KW-0539">Nucleus</keyword>
<keyword id="KW-0653">Protein transport</keyword>
<keyword id="KW-1185">Reference proteome</keyword>
<keyword id="KW-0813">Transport</keyword>
<sequence>MVESKIIKLLEQVQSADPNSRIQAELGLRDLEKYHDFAAKLTDIASSGASVPLRQGSLIYLQRYIVHHWSPLFEQFQDGPIPDENVKKHVRETLLHLLVSLDNFTLIKAVAYAVSLIANVDYPDEWPEVVPAVLHLLQSTNENSINASLDVLDELVDESLVEEQFFIIAPQLASILYQFIFSAPPNDSMRMLQARGIKLFRSCLELIEIYKETKAEHVRVFLEQILPPWMDMFSHKFEVSLVDDRQVILPDSCGYFCIMGEIAMTLTKLRELFPSKLTPYVVTFVELVWNIIEKLLDPYIREVVFSDGLDDSAFGDKYPIRYLVELLLFVSVALQSKFVQNLFVSNTVPVPPLPPCIPLLVQYTQLPKHQIEVYESDVSEYIANEFSMDFASDTVRGAAISVLSAFEEHTTLPIQQSLREMSATYILNNEINWIYQEALLYACCSVDAASDDTYDDYLDPIYEAIKVRIDYSDAPILLLSRFFLFIGYFSESTVVASQFFQIIMNNLVNALQVDTVQYAAMKAIERFCSVGKVKPILSLQPMILEVLSQYASKSSDEALVLLVEAISSAVKLDCAKAAELGNSVIPLLFNLVATNASDPYICGIIEDTFEDIIHAANNYESMCEITLPELLQVLNQEDPIMVNIGATLLSCLIRAGPSPLPNGFVGYVLPPVYKITQIHSGDTELLQLSQEILKGLLEKDTPQLLETEISGSSGFQYILFILHQLLDKESDDSACFLVGPILLELADHASQMVDLQSILLSCIKRLAIAEQPRFIQSIIYVFAKLIVKDSLGMMHFLTSSLLNEQGLTAFEVLMTVWCDNFVYFSNFKNISIICIAMTKIYSFDSPLLDSVQVKGELISHSNRIITRSQSKLHPEEYSYVSVGEKILRLLSEEFVSLSKDAIVEEVSDDGADDWDDGPISAETFGLSANDVNELSKDEFSGVDNSEDEDNTDLQFYLLEFFKEAMKSNLHNINEVVFRLPQEEQDALVQIKEK</sequence>
<name>IMB5_SCHPO</name>
<accession>Q10297</accession>
<proteinExistence type="inferred from homology"/>
<gene>
    <name type="primary">kap114</name>
    <name type="ORF">SPAC22H10.03c</name>
</gene>
<feature type="chain" id="PRO_0000120777" description="Importin subunit beta-5">
    <location>
        <begin position="1"/>
        <end position="993"/>
    </location>
</feature>
<feature type="domain" description="Importin N-terminal" evidence="2">
    <location>
        <begin position="24"/>
        <end position="100"/>
    </location>
</feature>
<organism>
    <name type="scientific">Schizosaccharomyces pombe (strain 972 / ATCC 24843)</name>
    <name type="common">Fission yeast</name>
    <dbReference type="NCBI Taxonomy" id="284812"/>
    <lineage>
        <taxon>Eukaryota</taxon>
        <taxon>Fungi</taxon>
        <taxon>Dikarya</taxon>
        <taxon>Ascomycota</taxon>
        <taxon>Taphrinomycotina</taxon>
        <taxon>Schizosaccharomycetes</taxon>
        <taxon>Schizosaccharomycetales</taxon>
        <taxon>Schizosaccharomycetaceae</taxon>
        <taxon>Schizosaccharomyces</taxon>
    </lineage>
</organism>
<reference key="1">
    <citation type="journal article" date="2002" name="Nature">
        <title>The genome sequence of Schizosaccharomyces pombe.</title>
        <authorList>
            <person name="Wood V."/>
            <person name="Gwilliam R."/>
            <person name="Rajandream M.A."/>
            <person name="Lyne M.H."/>
            <person name="Lyne R."/>
            <person name="Stewart A."/>
            <person name="Sgouros J.G."/>
            <person name="Peat N."/>
            <person name="Hayles J."/>
            <person name="Baker S.G."/>
            <person name="Basham D."/>
            <person name="Bowman S."/>
            <person name="Brooks K."/>
            <person name="Brown D."/>
            <person name="Brown S."/>
            <person name="Chillingworth T."/>
            <person name="Churcher C.M."/>
            <person name="Collins M."/>
            <person name="Connor R."/>
            <person name="Cronin A."/>
            <person name="Davis P."/>
            <person name="Feltwell T."/>
            <person name="Fraser A."/>
            <person name="Gentles S."/>
            <person name="Goble A."/>
            <person name="Hamlin N."/>
            <person name="Harris D.E."/>
            <person name="Hidalgo J."/>
            <person name="Hodgson G."/>
            <person name="Holroyd S."/>
            <person name="Hornsby T."/>
            <person name="Howarth S."/>
            <person name="Huckle E.J."/>
            <person name="Hunt S."/>
            <person name="Jagels K."/>
            <person name="James K.D."/>
            <person name="Jones L."/>
            <person name="Jones M."/>
            <person name="Leather S."/>
            <person name="McDonald S."/>
            <person name="McLean J."/>
            <person name="Mooney P."/>
            <person name="Moule S."/>
            <person name="Mungall K.L."/>
            <person name="Murphy L.D."/>
            <person name="Niblett D."/>
            <person name="Odell C."/>
            <person name="Oliver K."/>
            <person name="O'Neil S."/>
            <person name="Pearson D."/>
            <person name="Quail M.A."/>
            <person name="Rabbinowitsch E."/>
            <person name="Rutherford K.M."/>
            <person name="Rutter S."/>
            <person name="Saunders D."/>
            <person name="Seeger K."/>
            <person name="Sharp S."/>
            <person name="Skelton J."/>
            <person name="Simmonds M.N."/>
            <person name="Squares R."/>
            <person name="Squares S."/>
            <person name="Stevens K."/>
            <person name="Taylor K."/>
            <person name="Taylor R.G."/>
            <person name="Tivey A."/>
            <person name="Walsh S.V."/>
            <person name="Warren T."/>
            <person name="Whitehead S."/>
            <person name="Woodward J.R."/>
            <person name="Volckaert G."/>
            <person name="Aert R."/>
            <person name="Robben J."/>
            <person name="Grymonprez B."/>
            <person name="Weltjens I."/>
            <person name="Vanstreels E."/>
            <person name="Rieger M."/>
            <person name="Schaefer M."/>
            <person name="Mueller-Auer S."/>
            <person name="Gabel C."/>
            <person name="Fuchs M."/>
            <person name="Duesterhoeft A."/>
            <person name="Fritzc C."/>
            <person name="Holzer E."/>
            <person name="Moestl D."/>
            <person name="Hilbert H."/>
            <person name="Borzym K."/>
            <person name="Langer I."/>
            <person name="Beck A."/>
            <person name="Lehrach H."/>
            <person name="Reinhardt R."/>
            <person name="Pohl T.M."/>
            <person name="Eger P."/>
            <person name="Zimmermann W."/>
            <person name="Wedler H."/>
            <person name="Wambutt R."/>
            <person name="Purnelle B."/>
            <person name="Goffeau A."/>
            <person name="Cadieu E."/>
            <person name="Dreano S."/>
            <person name="Gloux S."/>
            <person name="Lelaure V."/>
            <person name="Mottier S."/>
            <person name="Galibert F."/>
            <person name="Aves S.J."/>
            <person name="Xiang Z."/>
            <person name="Hunt C."/>
            <person name="Moore K."/>
            <person name="Hurst S.M."/>
            <person name="Lucas M."/>
            <person name="Rochet M."/>
            <person name="Gaillardin C."/>
            <person name="Tallada V.A."/>
            <person name="Garzon A."/>
            <person name="Thode G."/>
            <person name="Daga R.R."/>
            <person name="Cruzado L."/>
            <person name="Jimenez J."/>
            <person name="Sanchez M."/>
            <person name="del Rey F."/>
            <person name="Benito J."/>
            <person name="Dominguez A."/>
            <person name="Revuelta J.L."/>
            <person name="Moreno S."/>
            <person name="Armstrong J."/>
            <person name="Forsburg S.L."/>
            <person name="Cerutti L."/>
            <person name="Lowe T."/>
            <person name="McCombie W.R."/>
            <person name="Paulsen I."/>
            <person name="Potashkin J."/>
            <person name="Shpakovski G.V."/>
            <person name="Ussery D."/>
            <person name="Barrell B.G."/>
            <person name="Nurse P."/>
        </authorList>
    </citation>
    <scope>NUCLEOTIDE SEQUENCE [LARGE SCALE GENOMIC DNA]</scope>
    <source>
        <strain>972 / ATCC 24843</strain>
    </source>
</reference>
<reference key="2">
    <citation type="journal article" date="2011" name="Science">
        <title>Comparative functional genomics of the fission yeasts.</title>
        <authorList>
            <person name="Rhind N."/>
            <person name="Chen Z."/>
            <person name="Yassour M."/>
            <person name="Thompson D.A."/>
            <person name="Haas B.J."/>
            <person name="Habib N."/>
            <person name="Wapinski I."/>
            <person name="Roy S."/>
            <person name="Lin M.F."/>
            <person name="Heiman D.I."/>
            <person name="Young S.K."/>
            <person name="Furuya K."/>
            <person name="Guo Y."/>
            <person name="Pidoux A."/>
            <person name="Chen H.M."/>
            <person name="Robbertse B."/>
            <person name="Goldberg J.M."/>
            <person name="Aoki K."/>
            <person name="Bayne E.H."/>
            <person name="Berlin A.M."/>
            <person name="Desjardins C.A."/>
            <person name="Dobbs E."/>
            <person name="Dukaj L."/>
            <person name="Fan L."/>
            <person name="FitzGerald M.G."/>
            <person name="French C."/>
            <person name="Gujja S."/>
            <person name="Hansen K."/>
            <person name="Keifenheim D."/>
            <person name="Levin J.Z."/>
            <person name="Mosher R.A."/>
            <person name="Mueller C.A."/>
            <person name="Pfiffner J."/>
            <person name="Priest M."/>
            <person name="Russ C."/>
            <person name="Smialowska A."/>
            <person name="Swoboda P."/>
            <person name="Sykes S.M."/>
            <person name="Vaughn M."/>
            <person name="Vengrova S."/>
            <person name="Yoder R."/>
            <person name="Zeng Q."/>
            <person name="Allshire R."/>
            <person name="Baulcombe D."/>
            <person name="Birren B.W."/>
            <person name="Brown W."/>
            <person name="Ekwall K."/>
            <person name="Kellis M."/>
            <person name="Leatherwood J."/>
            <person name="Levin H."/>
            <person name="Margalit H."/>
            <person name="Martienssen R."/>
            <person name="Nieduszynski C.A."/>
            <person name="Spatafora J.W."/>
            <person name="Friedman N."/>
            <person name="Dalgaard J.Z."/>
            <person name="Baumann P."/>
            <person name="Niki H."/>
            <person name="Regev A."/>
            <person name="Nusbaum C."/>
        </authorList>
    </citation>
    <scope>REVISION OF GENE MODEL</scope>
</reference>
<reference key="3">
    <citation type="journal article" date="2004" name="Yeast">
        <title>Identification of genes encoding putative nucleoporins and transport factors in the fission yeast Schizosaccharomyces pombe: a deletion analysis.</title>
        <authorList>
            <person name="Chen X.Q."/>
            <person name="Du X."/>
            <person name="Liu J."/>
            <person name="Balasubramanian M.K."/>
            <person name="Balasundaram D."/>
        </authorList>
    </citation>
    <scope>SUBCELLULAR LOCATION</scope>
</reference>
<dbReference type="EMBL" id="CU329670">
    <property type="protein sequence ID" value="CAA93604.2"/>
    <property type="molecule type" value="Genomic_DNA"/>
</dbReference>
<dbReference type="PIR" id="T38205">
    <property type="entry name" value="T38205"/>
</dbReference>
<dbReference type="RefSeq" id="NP_593739.2">
    <property type="nucleotide sequence ID" value="NM_001019170.2"/>
</dbReference>
<dbReference type="SMR" id="Q10297"/>
<dbReference type="BioGRID" id="278375">
    <property type="interactions" value="54"/>
</dbReference>
<dbReference type="FunCoup" id="Q10297">
    <property type="interactions" value="717"/>
</dbReference>
<dbReference type="STRING" id="284812.Q10297"/>
<dbReference type="PaxDb" id="4896-SPAC22H10.03c.1"/>
<dbReference type="EnsemblFungi" id="SPAC22H10.03c.1">
    <property type="protein sequence ID" value="SPAC22H10.03c.1:pep"/>
    <property type="gene ID" value="SPAC22H10.03c"/>
</dbReference>
<dbReference type="GeneID" id="2541885"/>
<dbReference type="KEGG" id="spo:2541885"/>
<dbReference type="PomBase" id="SPAC22H10.03c">
    <property type="gene designation" value="kap114"/>
</dbReference>
<dbReference type="VEuPathDB" id="FungiDB:SPAC22H10.03c"/>
<dbReference type="eggNOG" id="KOG2274">
    <property type="taxonomic scope" value="Eukaryota"/>
</dbReference>
<dbReference type="HOGENOM" id="CLU_008920_1_1_1"/>
<dbReference type="InParanoid" id="Q10297"/>
<dbReference type="OMA" id="NPDQYTI"/>
<dbReference type="PRO" id="PR:Q10297"/>
<dbReference type="Proteomes" id="UP000002485">
    <property type="component" value="Chromosome I"/>
</dbReference>
<dbReference type="GO" id="GO:0005829">
    <property type="term" value="C:cytosol"/>
    <property type="evidence" value="ECO:0007005"/>
    <property type="project" value="PomBase"/>
</dbReference>
<dbReference type="GO" id="GO:0005635">
    <property type="term" value="C:nuclear envelope"/>
    <property type="evidence" value="ECO:0007005"/>
    <property type="project" value="PomBase"/>
</dbReference>
<dbReference type="GO" id="GO:0005634">
    <property type="term" value="C:nucleus"/>
    <property type="evidence" value="ECO:0000314"/>
    <property type="project" value="PomBase"/>
</dbReference>
<dbReference type="GO" id="GO:0005525">
    <property type="term" value="F:GTP binding"/>
    <property type="evidence" value="ECO:0000303"/>
    <property type="project" value="PomBase"/>
</dbReference>
<dbReference type="GO" id="GO:0061608">
    <property type="term" value="F:nuclear import signal receptor activity"/>
    <property type="evidence" value="ECO:0000266"/>
    <property type="project" value="PomBase"/>
</dbReference>
<dbReference type="GO" id="GO:0031267">
    <property type="term" value="F:small GTPase binding"/>
    <property type="evidence" value="ECO:0007669"/>
    <property type="project" value="InterPro"/>
</dbReference>
<dbReference type="GO" id="GO:0006606">
    <property type="term" value="P:protein import into nucleus"/>
    <property type="evidence" value="ECO:0000318"/>
    <property type="project" value="GO_Central"/>
</dbReference>
<dbReference type="Gene3D" id="1.25.10.10">
    <property type="entry name" value="Leucine-rich Repeat Variant"/>
    <property type="match status" value="1"/>
</dbReference>
<dbReference type="InterPro" id="IPR011989">
    <property type="entry name" value="ARM-like"/>
</dbReference>
<dbReference type="InterPro" id="IPR016024">
    <property type="entry name" value="ARM-type_fold"/>
</dbReference>
<dbReference type="InterPro" id="IPR056840">
    <property type="entry name" value="HEAT_IPO9_central"/>
</dbReference>
<dbReference type="InterPro" id="IPR001494">
    <property type="entry name" value="Importin-beta_N"/>
</dbReference>
<dbReference type="PANTHER" id="PTHR10997">
    <property type="entry name" value="IMPORTIN-7, 8, 11"/>
    <property type="match status" value="1"/>
</dbReference>
<dbReference type="PANTHER" id="PTHR10997:SF9">
    <property type="entry name" value="IMPORTIN-9"/>
    <property type="match status" value="1"/>
</dbReference>
<dbReference type="Pfam" id="PF25018">
    <property type="entry name" value="HEAT_IPO9_c"/>
    <property type="match status" value="1"/>
</dbReference>
<dbReference type="Pfam" id="PF03810">
    <property type="entry name" value="IBN_N"/>
    <property type="match status" value="1"/>
</dbReference>
<dbReference type="SMART" id="SM00913">
    <property type="entry name" value="IBN_N"/>
    <property type="match status" value="1"/>
</dbReference>
<dbReference type="SUPFAM" id="SSF48371">
    <property type="entry name" value="ARM repeat"/>
    <property type="match status" value="1"/>
</dbReference>
<dbReference type="PROSITE" id="PS50166">
    <property type="entry name" value="IMPORTIN_B_NT"/>
    <property type="match status" value="1"/>
</dbReference>